<accession>D4GZ42</accession>
<proteinExistence type="inferred from homology"/>
<evidence type="ECO:0000269" key="1">
    <source>
    </source>
</evidence>
<evidence type="ECO:0000305" key="2"/>
<gene>
    <name type="ordered locus">HVO_1613</name>
    <name type="ORF">C498_03430</name>
</gene>
<comment type="function">
    <text evidence="1">Glycosyltransferase that adds a monosaccharide to dolichol phosphate, thereby being responsible for generating one of the three monosaccharide-modified dolichol phosphates. The subunit onto which additional sugars are added is not known.</text>
</comment>
<comment type="disruption phenotype">
    <text evidence="1">Cells do not generate the small monosaccharide-charged dolichol phosphate species.</text>
</comment>
<comment type="similarity">
    <text evidence="2">Belongs to the glycosyltransferase 2 family.</text>
</comment>
<organism>
    <name type="scientific">Haloferax volcanii (strain ATCC 29605 / DSM 3757 / JCM 8879 / NBRC 14742 / NCIMB 2012 / VKM B-1768 / DS2)</name>
    <name type="common">Halobacterium volcanii</name>
    <dbReference type="NCBI Taxonomy" id="309800"/>
    <lineage>
        <taxon>Archaea</taxon>
        <taxon>Methanobacteriati</taxon>
        <taxon>Methanobacteriota</taxon>
        <taxon>Stenosarchaea group</taxon>
        <taxon>Halobacteria</taxon>
        <taxon>Halobacteriales</taxon>
        <taxon>Haloferacaceae</taxon>
        <taxon>Haloferax</taxon>
    </lineage>
</organism>
<sequence>MTEYTFDDLAVVMGTYNEEQAIGSVLADIDRITDGRAEVVCVDGSDDRTPEIARKMGARVIEQEPQGYGVAVEAAVLAPDRPVVVTTDCDDTYPMEYLPKFLDLINDGYDVVSGDRITKGAETMPRLNRAGNIAFARLASFLMGATVHDTTTGMRAYRRELLHDIEWTENTGLSAELLIRPAMRGYNIAEVPIPYRERAGETKLDPFAGGAAIGKSIVKVCLEERLRL</sequence>
<keyword id="KW-0328">Glycosyltransferase</keyword>
<keyword id="KW-1185">Reference proteome</keyword>
<keyword id="KW-0808">Transferase</keyword>
<feature type="chain" id="PRO_0000428779" description="Dolichyl-phosphate hexose transferase HVO_1613">
    <location>
        <begin position="1"/>
        <end position="228"/>
    </location>
</feature>
<protein>
    <recommendedName>
        <fullName>Dolichyl-phosphate hexose transferase HVO_1613</fullName>
        <ecNumber>2.4.1.-</ecNumber>
    </recommendedName>
</protein>
<reference key="1">
    <citation type="journal article" date="2010" name="PLoS ONE">
        <title>The complete genome sequence of Haloferax volcanii DS2, a model archaeon.</title>
        <authorList>
            <person name="Hartman A.L."/>
            <person name="Norais C."/>
            <person name="Badger J.H."/>
            <person name="Delmas S."/>
            <person name="Haldenby S."/>
            <person name="Madupu R."/>
            <person name="Robinson J."/>
            <person name="Khouri H."/>
            <person name="Ren Q."/>
            <person name="Lowe T.M."/>
            <person name="Maupin-Furlow J."/>
            <person name="Pohlschroder M."/>
            <person name="Daniels C."/>
            <person name="Pfeiffer F."/>
            <person name="Allers T."/>
            <person name="Eisen J.A."/>
        </authorList>
    </citation>
    <scope>NUCLEOTIDE SEQUENCE [LARGE SCALE GENOMIC DNA]</scope>
    <source>
        <strain>ATCC 29605 / DSM 3757 / JCM 8879 / NBRC 14742 / NCIMB 2012 / VKM B-1768 / DS2</strain>
    </source>
</reference>
<reference key="2">
    <citation type="journal article" date="2014" name="PLoS Genet.">
        <title>Phylogenetically driven sequencing of extremely halophilic archaea reveals strategies for static and dynamic osmo-response.</title>
        <authorList>
            <person name="Becker E.A."/>
            <person name="Seitzer P.M."/>
            <person name="Tritt A."/>
            <person name="Larsen D."/>
            <person name="Krusor M."/>
            <person name="Yao A.I."/>
            <person name="Wu D."/>
            <person name="Madern D."/>
            <person name="Eisen J.A."/>
            <person name="Darling A.E."/>
            <person name="Facciotti M.T."/>
        </authorList>
    </citation>
    <scope>NUCLEOTIDE SEQUENCE [LARGE SCALE GENOMIC DNA]</scope>
    <source>
        <strain>ATCC 29605 / DSM 3757 / JCM 8879 / NBRC 14742 / NCIMB 2012 / VKM B-1768 / DS2</strain>
    </source>
</reference>
<reference key="3">
    <citation type="journal article" date="2010" name="J. Bacteriol.">
        <title>AglJ adds the first sugar of the N-linked pentasaccharide decorating the Haloferax volcanii S-layer glycoprotein.</title>
        <authorList>
            <person name="Kaminski L."/>
            <person name="Abu-Qarn M."/>
            <person name="Guan Z."/>
            <person name="Naparstek S."/>
            <person name="Ventura V.V."/>
            <person name="Raetz C.R."/>
            <person name="Hitchen P.G."/>
            <person name="Dell A."/>
            <person name="Eichler J."/>
        </authorList>
    </citation>
    <scope>FUNCTION</scope>
    <scope>DISRUPTION PHENOTYPE</scope>
    <source>
        <strain>DS2 / DS70</strain>
    </source>
</reference>
<dbReference type="EC" id="2.4.1.-"/>
<dbReference type="EMBL" id="CP001956">
    <property type="protein sequence ID" value="ADE02947.1"/>
    <property type="molecule type" value="Genomic_DNA"/>
</dbReference>
<dbReference type="EMBL" id="AOHU01000029">
    <property type="protein sequence ID" value="ELY35628.1"/>
    <property type="molecule type" value="Genomic_DNA"/>
</dbReference>
<dbReference type="RefSeq" id="WP_004041505.1">
    <property type="nucleotide sequence ID" value="NC_013967.1"/>
</dbReference>
<dbReference type="SMR" id="D4GZ42"/>
<dbReference type="STRING" id="309800.HVO_1613"/>
<dbReference type="CAZy" id="GT2">
    <property type="family name" value="Glycosyltransferase Family 2"/>
</dbReference>
<dbReference type="PaxDb" id="309800-C498_03430"/>
<dbReference type="EnsemblBacteria" id="ADE02947">
    <property type="protein sequence ID" value="ADE02947"/>
    <property type="gene ID" value="HVO_1613"/>
</dbReference>
<dbReference type="GeneID" id="8923970"/>
<dbReference type="KEGG" id="hvo:HVO_1613"/>
<dbReference type="PATRIC" id="fig|309800.29.peg.665"/>
<dbReference type="eggNOG" id="arCOG00895">
    <property type="taxonomic scope" value="Archaea"/>
</dbReference>
<dbReference type="HOGENOM" id="CLU_033536_7_3_2"/>
<dbReference type="OrthoDB" id="147253at2157"/>
<dbReference type="Proteomes" id="UP000008243">
    <property type="component" value="Chromosome"/>
</dbReference>
<dbReference type="Proteomes" id="UP000011532">
    <property type="component" value="Unassembled WGS sequence"/>
</dbReference>
<dbReference type="GO" id="GO:0016757">
    <property type="term" value="F:glycosyltransferase activity"/>
    <property type="evidence" value="ECO:0007669"/>
    <property type="project" value="UniProtKB-KW"/>
</dbReference>
<dbReference type="CDD" id="cd04179">
    <property type="entry name" value="DPM_DPG-synthase_like"/>
    <property type="match status" value="1"/>
</dbReference>
<dbReference type="Gene3D" id="3.90.550.10">
    <property type="entry name" value="Spore Coat Polysaccharide Biosynthesis Protein SpsA, Chain A"/>
    <property type="match status" value="1"/>
</dbReference>
<dbReference type="InterPro" id="IPR054887">
    <property type="entry name" value="DPhHxTase"/>
</dbReference>
<dbReference type="InterPro" id="IPR001173">
    <property type="entry name" value="Glyco_trans_2-like"/>
</dbReference>
<dbReference type="InterPro" id="IPR050256">
    <property type="entry name" value="Glycosyltransferase_2"/>
</dbReference>
<dbReference type="InterPro" id="IPR029044">
    <property type="entry name" value="Nucleotide-diphossugar_trans"/>
</dbReference>
<dbReference type="NCBIfam" id="NF041391">
    <property type="entry name" value="DPhHxTase_Halo"/>
    <property type="match status" value="1"/>
</dbReference>
<dbReference type="PANTHER" id="PTHR48090:SF7">
    <property type="entry name" value="RFBJ PROTEIN"/>
    <property type="match status" value="1"/>
</dbReference>
<dbReference type="PANTHER" id="PTHR48090">
    <property type="entry name" value="UNDECAPRENYL-PHOSPHATE 4-DEOXY-4-FORMAMIDO-L-ARABINOSE TRANSFERASE-RELATED"/>
    <property type="match status" value="1"/>
</dbReference>
<dbReference type="Pfam" id="PF00535">
    <property type="entry name" value="Glycos_transf_2"/>
    <property type="match status" value="1"/>
</dbReference>
<dbReference type="SUPFAM" id="SSF53448">
    <property type="entry name" value="Nucleotide-diphospho-sugar transferases"/>
    <property type="match status" value="1"/>
</dbReference>
<name>DPM1L_HALVD</name>